<feature type="signal peptide" evidence="2">
    <location>
        <begin position="1"/>
        <end position="15"/>
    </location>
</feature>
<feature type="chain" id="PRO_0000039124" description="Hemagglutinin HA1 chain" evidence="1">
    <location>
        <begin position="16"/>
        <end position="362"/>
    </location>
</feature>
<feature type="glycosylation site" description="N-linked (GlcNAc...) asparagine; by host" evidence="2">
    <location>
        <position position="40"/>
    </location>
</feature>
<feature type="glycosylation site" description="N-linked (GlcNAc...) asparagine; by host" evidence="2">
    <location>
        <position position="74"/>
    </location>
</feature>
<feature type="glycosylation site" description="N-linked (GlcNAc...) asparagine; by host" evidence="2">
    <location>
        <position position="160"/>
    </location>
</feature>
<feature type="glycosylation site" description="N-linked (GlcNAc...) asparagine; by host" evidence="2">
    <location>
        <position position="181"/>
    </location>
</feature>
<feature type="glycosylation site" description="N-linked (GlcNAc...) asparagine; by host" evidence="2">
    <location>
        <position position="319"/>
    </location>
</feature>
<feature type="glycosylation site" description="N-linked (GlcNAc...) asparagine; by host" evidence="2">
    <location>
        <position position="348"/>
    </location>
</feature>
<feature type="non-terminal residue">
    <location>
        <position position="362"/>
    </location>
</feature>
<protein>
    <recommendedName>
        <fullName>Hemagglutinin</fullName>
    </recommendedName>
    <component>
        <recommendedName>
            <fullName>Hemagglutinin HA1 chain</fullName>
        </recommendedName>
    </component>
</protein>
<reference key="1">
    <citation type="journal article" date="1992" name="J. Gen. Virol.">
        <title>Antigenic and genetic characterization of the haemagglutinins of recent cocirculating strains of influenza B virus.</title>
        <authorList>
            <person name="Rota P.A."/>
            <person name="Hemphill M."/>
            <person name="Whistler T."/>
            <person name="Regnery H.L."/>
            <person name="Kendal A.P."/>
        </authorList>
    </citation>
    <scope>NUCLEOTIDE SEQUENCE [GENOMIC RNA]</scope>
</reference>
<keyword id="KW-1015">Disulfide bond</keyword>
<keyword id="KW-1170">Fusion of virus membrane with host endosomal membrane</keyword>
<keyword id="KW-1168">Fusion of virus membrane with host membrane</keyword>
<keyword id="KW-0325">Glycoprotein</keyword>
<keyword id="KW-0348">Hemagglutinin</keyword>
<keyword id="KW-1032">Host cell membrane</keyword>
<keyword id="KW-1043">Host membrane</keyword>
<keyword id="KW-0945">Host-virus interaction</keyword>
<keyword id="KW-0449">Lipoprotein</keyword>
<keyword id="KW-0472">Membrane</keyword>
<keyword id="KW-0564">Palmitate</keyword>
<keyword id="KW-0732">Signal</keyword>
<keyword id="KW-0812">Transmembrane</keyword>
<keyword id="KW-1161">Viral attachment to host cell</keyword>
<keyword id="KW-0261">Viral envelope protein</keyword>
<keyword id="KW-1162">Viral penetration into host cytoplasm</keyword>
<keyword id="KW-0946">Virion</keyword>
<keyword id="KW-1160">Virus entry into host cell</keyword>
<sequence>MKAIIVLLMVVTSNADRICTGITSSNSPHVVQTATQGEVNVTGVIPLTTTPTKSHFANLKGTKTRGKLCPKCLNCTDLDVALARPKCTGTIPSAKASILHEVKPVTSGCFPIMHDRTKIRQLPNLLRGYEHIRLSTHNVINAETAPGGPYKIGTSGSCPNVTNGNGFFATMAWAVPKNDNNKTATNPLTVEIPYICTEGEDQITVWGFHSDNEAQMVKLYGDSKPQKFTSSANGVTTHYVSQIGGFPNQAEDGGLPQSGRIVVDYMVQKSGKTGTITYQRGILLPQKVWCASGRSKVIKGSLPLIGERDCLHEKYGGLNKSKPYYTGEHAKAIGNCPIWVKTPLKLANGTKYRPPAKLLKER</sequence>
<dbReference type="EMBL" id="M65173">
    <property type="protein sequence ID" value="AAA43711.1"/>
    <property type="molecule type" value="Genomic_RNA"/>
</dbReference>
<dbReference type="PIR" id="JQ1903">
    <property type="entry name" value="JQ1903"/>
</dbReference>
<dbReference type="SMR" id="Q67377"/>
<dbReference type="GlyCosmos" id="Q67377">
    <property type="glycosylation" value="6 sites, No reported glycans"/>
</dbReference>
<dbReference type="GO" id="GO:0020002">
    <property type="term" value="C:host cell plasma membrane"/>
    <property type="evidence" value="ECO:0007669"/>
    <property type="project" value="UniProtKB-SubCell"/>
</dbReference>
<dbReference type="GO" id="GO:0016020">
    <property type="term" value="C:membrane"/>
    <property type="evidence" value="ECO:0007669"/>
    <property type="project" value="UniProtKB-KW"/>
</dbReference>
<dbReference type="GO" id="GO:0019031">
    <property type="term" value="C:viral envelope"/>
    <property type="evidence" value="ECO:0007669"/>
    <property type="project" value="UniProtKB-KW"/>
</dbReference>
<dbReference type="GO" id="GO:0055036">
    <property type="term" value="C:virion membrane"/>
    <property type="evidence" value="ECO:0007669"/>
    <property type="project" value="UniProtKB-SubCell"/>
</dbReference>
<dbReference type="GO" id="GO:0046789">
    <property type="term" value="F:host cell surface receptor binding"/>
    <property type="evidence" value="ECO:0007669"/>
    <property type="project" value="InterPro"/>
</dbReference>
<dbReference type="GO" id="GO:0039654">
    <property type="term" value="P:fusion of virus membrane with host endosome membrane"/>
    <property type="evidence" value="ECO:0007669"/>
    <property type="project" value="UniProtKB-KW"/>
</dbReference>
<dbReference type="GO" id="GO:0019064">
    <property type="term" value="P:fusion of virus membrane with host plasma membrane"/>
    <property type="evidence" value="ECO:0007669"/>
    <property type="project" value="InterPro"/>
</dbReference>
<dbReference type="GO" id="GO:0046718">
    <property type="term" value="P:symbiont entry into host cell"/>
    <property type="evidence" value="ECO:0007669"/>
    <property type="project" value="UniProtKB-KW"/>
</dbReference>
<dbReference type="GO" id="GO:0019062">
    <property type="term" value="P:virion attachment to host cell"/>
    <property type="evidence" value="ECO:0007669"/>
    <property type="project" value="UniProtKB-KW"/>
</dbReference>
<dbReference type="Gene3D" id="3.90.209.20">
    <property type="match status" value="1"/>
</dbReference>
<dbReference type="Gene3D" id="2.10.77.10">
    <property type="entry name" value="Hemagglutinin Chain A, Domain 2"/>
    <property type="match status" value="1"/>
</dbReference>
<dbReference type="InterPro" id="IPR008980">
    <property type="entry name" value="Capsid_hemagglutn"/>
</dbReference>
<dbReference type="InterPro" id="IPR013828">
    <property type="entry name" value="Hemagglutn_HA1_a/b_dom_sf"/>
</dbReference>
<dbReference type="InterPro" id="IPR001364">
    <property type="entry name" value="Hemagglutn_influenz_A/B"/>
</dbReference>
<dbReference type="Pfam" id="PF00509">
    <property type="entry name" value="Hemagglutinin"/>
    <property type="match status" value="1"/>
</dbReference>
<dbReference type="SUPFAM" id="SSF49818">
    <property type="entry name" value="Viral protein domain"/>
    <property type="match status" value="1"/>
</dbReference>
<accession>Q67377</accession>
<organismHost>
    <name type="scientific">Homo sapiens</name>
    <name type="common">Human</name>
    <dbReference type="NCBI Taxonomy" id="9606"/>
</organismHost>
<comment type="function">
    <text>Binds to sialic acid-containing receptors on the cell surface, bringing about the attachment of the virus particle to the cell. Plays a major role in the determination of host range restriction and virulence. Class I viral fusion protein. Responsible for penetration of the virus into the cell cytoplasm by mediating the fusion of the membrane of the endocytosed virus particle with the endosomal membrane. Low pH in endosomes induce an irreversible conformational change in HA2, releasing the fusion hydrophobic peptide. Several trimers are required to form a competent fusion pore.</text>
</comment>
<comment type="subunit">
    <text>Homotrimer of disulfide-linked HA1-HA2.</text>
</comment>
<comment type="subcellular location">
    <subcellularLocation>
        <location evidence="3">Virion membrane</location>
        <topology evidence="3">Single-pass type I membrane protein</topology>
    </subcellularLocation>
    <subcellularLocation>
        <location>Host apical cell membrane</location>
        <topology>Single-pass type I membrane protein</topology>
    </subcellularLocation>
    <text>Targeted to the apical plasma membrane in epithelial polarized cells through a signal present in the transmembrane domain. Associated with glycosphingolipid- and cholesterol-enriched detergent-resistant lipid rafts.</text>
</comment>
<comment type="PTM">
    <text evidence="1">In natural infection, inactive HA is matured into HA1 and HA2 outside the cell by one or more trypsin-like, arginine-specific endoprotease secreted by the bronchial epithelial cells. One identified protease that may be involved in this process is secreted in lungs by club cells (By similarity).</text>
</comment>
<comment type="PTM">
    <text evidence="1">Palmitoylated.</text>
</comment>
<comment type="miscellaneous">
    <text>Major glycoprotein, comprises over 80% of the envelope proteins present in virus particle.</text>
</comment>
<comment type="miscellaneous">
    <text>The extent of infection into host organism is determined by HA. Influenza viruses bud from the apical surface of polarized epithelial cells (e.g. bronchial epithelial cells) into lumen of lungs and are therefore usually pneumotropic. The reason is that HA is cleaved by tryptase clara which is restricted to lungs. However, HAs of H5 and H7 pantropic avian viruses subtypes can be cleaved by furin and subtilisin-type enzymes, allowing the virus to grow in other organs than lungs.</text>
</comment>
<comment type="miscellaneous">
    <text>The influenza B genome consist of 8 RNA segments. Genetic variation of hemagglutinin and/or neuraminidase genes results in the emergence of new influenza strains. The mechanism of variation can be the result of point mutations or the result of genetic reassortment between segments of two different strains.</text>
</comment>
<comment type="similarity">
    <text evidence="3">Belongs to the influenza viruses hemagglutinin family.</text>
</comment>
<organism>
    <name type="scientific">Influenza B virus (strain B/Paris/329/1990)</name>
    <dbReference type="NCBI Taxonomy" id="291795"/>
    <lineage>
        <taxon>Viruses</taxon>
        <taxon>Riboviria</taxon>
        <taxon>Orthornavirae</taxon>
        <taxon>Negarnaviricota</taxon>
        <taxon>Polyploviricotina</taxon>
        <taxon>Insthoviricetes</taxon>
        <taxon>Articulavirales</taxon>
        <taxon>Orthomyxoviridae</taxon>
        <taxon>Betainfluenzavirus</taxon>
        <taxon>Betainfluenzavirus influenzae</taxon>
        <taxon>Influenza B virus</taxon>
    </lineage>
</organism>
<gene>
    <name type="primary">HA</name>
</gene>
<name>HEMA_INBP3</name>
<proteinExistence type="inferred from homology"/>
<evidence type="ECO:0000250" key="1"/>
<evidence type="ECO:0000255" key="2"/>
<evidence type="ECO:0000305" key="3"/>